<dbReference type="EMBL" id="AY261363">
    <property type="status" value="NOT_ANNOTATED_CDS"/>
    <property type="molecule type" value="Genomic_DNA"/>
</dbReference>
<dbReference type="SMR" id="P0C9S8"/>
<dbReference type="Proteomes" id="UP000000859">
    <property type="component" value="Segment"/>
</dbReference>
<dbReference type="InterPro" id="IPR004858">
    <property type="entry name" value="MGF_505"/>
</dbReference>
<dbReference type="Pfam" id="PF03158">
    <property type="entry name" value="DUF249"/>
    <property type="match status" value="1"/>
</dbReference>
<dbReference type="SUPFAM" id="SSF140860">
    <property type="entry name" value="Pseudo ankyrin repeat-like"/>
    <property type="match status" value="1"/>
</dbReference>
<keyword id="KW-0426">Late protein</keyword>
<accession>P0C9S8</accession>
<reference key="1">
    <citation type="submission" date="2003-03" db="EMBL/GenBank/DDBJ databases">
        <title>African swine fever virus genomes.</title>
        <authorList>
            <person name="Kutish G.F."/>
            <person name="Rock D.L."/>
        </authorList>
    </citation>
    <scope>NUCLEOTIDE SEQUENCE [LARGE SCALE GENOMIC DNA]</scope>
</reference>
<evidence type="ECO:0000250" key="1">
    <source>
        <dbReference type="UniProtKB" id="Q89702"/>
    </source>
</evidence>
<evidence type="ECO:0000305" key="2"/>
<name>5052R_ASFP4</name>
<comment type="function">
    <text evidence="1">Plays a role in virus cell tropism, and may be required for efficient virus replication in macrophages.</text>
</comment>
<comment type="induction">
    <text evidence="2">Expressed in the late phase of the viral replicative cycle.</text>
</comment>
<comment type="similarity">
    <text evidence="2">Belongs to the asfivirus MGF 505 family.</text>
</comment>
<organismHost>
    <name type="scientific">Ornithodoros</name>
    <name type="common">relapsing fever ticks</name>
    <dbReference type="NCBI Taxonomy" id="6937"/>
</organismHost>
<organismHost>
    <name type="scientific">Phacochoerus aethiopicus</name>
    <name type="common">Warthog</name>
    <dbReference type="NCBI Taxonomy" id="85517"/>
</organismHost>
<organismHost>
    <name type="scientific">Phacochoerus africanus</name>
    <name type="common">Warthog</name>
    <dbReference type="NCBI Taxonomy" id="41426"/>
</organismHost>
<organismHost>
    <name type="scientific">Potamochoerus larvatus</name>
    <name type="common">Bushpig</name>
    <dbReference type="NCBI Taxonomy" id="273792"/>
</organismHost>
<organismHost>
    <name type="scientific">Sus scrofa</name>
    <name type="common">Pig</name>
    <dbReference type="NCBI Taxonomy" id="9823"/>
</organismHost>
<proteinExistence type="inferred from homology"/>
<organism>
    <name type="scientific">African swine fever virus (isolate Tick/South Africa/Pretoriuskop Pr4/1996)</name>
    <name type="common">ASFV</name>
    <dbReference type="NCBI Taxonomy" id="561443"/>
    <lineage>
        <taxon>Viruses</taxon>
        <taxon>Varidnaviria</taxon>
        <taxon>Bamfordvirae</taxon>
        <taxon>Nucleocytoviricota</taxon>
        <taxon>Pokkesviricetes</taxon>
        <taxon>Asfuvirales</taxon>
        <taxon>Asfarviridae</taxon>
        <taxon>Asfivirus</taxon>
        <taxon>African swine fever virus</taxon>
    </lineage>
</organism>
<sequence length="517" mass="61264">MFSLQDLCRKHLFILPDVFGEHVLQRLGLYWRCHGSLQRVGDDHILIRRDLILSTNEALRMAGEEGNNEVVKLLLLWKGNLHYAIIGALQGDQYDLIHKYENQIGDFHLILPLIQDAKTFEKCHALERFCGVSCLLEHATKYNMLPILQTYQEELSMRAYLRETLFELACLWQRYDVLKWIEQTMHVYDLKIMFNIAISKRDLTMYSLGYILLFDRENTEATLLTQHLEKTAAKGLLYFVLETLKYGGNIDIVLTQAVKYNHRKLLDYFLRQLPRKHIEKLLLLAVQEKASKKTLNLLLSHLNYSVKRIKKLLRYVIEYESTLVIKILLKKRVNLIDAMLEKMVRYFSATKVRTIMDELLISPERVIKMAIQKMRTDIVIHTSYVWEDDLERLTRLKNMVYTIKYEHGKKMLIKVMHGIYKNLLYDEREKVMFHLAKLYVAQNAATQFRDICKDCYKLDVARFKPRFKQLMLDCLEIVTKKSCYSILEILEKHIISLFTMKVMTEEEKNLCLEILYK</sequence>
<feature type="chain" id="PRO_0000373320" description="Protein MGF 505-2R">
    <location>
        <begin position="1"/>
        <end position="517"/>
    </location>
</feature>
<gene>
    <name type="ordered locus">Pret-038</name>
</gene>
<protein>
    <recommendedName>
        <fullName>Protein MGF 505-2R</fullName>
    </recommendedName>
</protein>